<dbReference type="EMBL" id="AC006081">
    <property type="protein sequence ID" value="AAD24386.1"/>
    <property type="molecule type" value="Genomic_DNA"/>
</dbReference>
<dbReference type="EMBL" id="CP002685">
    <property type="protein sequence ID" value="AEC06966.1"/>
    <property type="molecule type" value="Genomic_DNA"/>
</dbReference>
<dbReference type="EMBL" id="CP002685">
    <property type="protein sequence ID" value="AEC06967.1"/>
    <property type="molecule type" value="Genomic_DNA"/>
</dbReference>
<dbReference type="EMBL" id="AB493556">
    <property type="protein sequence ID" value="BAH30394.1"/>
    <property type="molecule type" value="mRNA"/>
</dbReference>
<dbReference type="EMBL" id="AY163773">
    <property type="protein sequence ID" value="AAN85197.1"/>
    <property type="molecule type" value="mRNA"/>
</dbReference>
<dbReference type="EMBL" id="AY163774">
    <property type="protein sequence ID" value="AAN85198.1"/>
    <property type="molecule type" value="mRNA"/>
</dbReference>
<dbReference type="EMBL" id="AY163775">
    <property type="protein sequence ID" value="AAN85199.1"/>
    <property type="molecule type" value="mRNA"/>
</dbReference>
<dbReference type="PIR" id="B84585">
    <property type="entry name" value="B84585"/>
</dbReference>
<dbReference type="RefSeq" id="NP_179601.1">
    <molecule id="Q9SL70-1"/>
    <property type="nucleotide sequence ID" value="NM_127569.3"/>
</dbReference>
<dbReference type="RefSeq" id="NP_849995.1">
    <molecule id="Q9SL70-2"/>
    <property type="nucleotide sequence ID" value="NM_179664.2"/>
</dbReference>
<dbReference type="SMR" id="Q9SL70"/>
<dbReference type="BioGRID" id="1884">
    <property type="interactions" value="11"/>
</dbReference>
<dbReference type="FunCoup" id="Q9SL70">
    <property type="interactions" value="28"/>
</dbReference>
<dbReference type="IntAct" id="Q9SL70">
    <property type="interactions" value="9"/>
</dbReference>
<dbReference type="STRING" id="3702.Q9SL70"/>
<dbReference type="iPTMnet" id="Q9SL70"/>
<dbReference type="PaxDb" id="3702-AT2G20110.2"/>
<dbReference type="ProteomicsDB" id="234379">
    <molecule id="Q9SL70-1"/>
</dbReference>
<dbReference type="EnsemblPlants" id="AT2G20110.1">
    <molecule id="Q9SL70-1"/>
    <property type="protein sequence ID" value="AT2G20110.1"/>
    <property type="gene ID" value="AT2G20110"/>
</dbReference>
<dbReference type="EnsemblPlants" id="AT2G20110.2">
    <molecule id="Q9SL70-2"/>
    <property type="protein sequence ID" value="AT2G20110.2"/>
    <property type="gene ID" value="AT2G20110"/>
</dbReference>
<dbReference type="GeneID" id="816530"/>
<dbReference type="Gramene" id="AT2G20110.1">
    <molecule id="Q9SL70-1"/>
    <property type="protein sequence ID" value="AT2G20110.1"/>
    <property type="gene ID" value="AT2G20110"/>
</dbReference>
<dbReference type="Gramene" id="AT2G20110.2">
    <molecule id="Q9SL70-2"/>
    <property type="protein sequence ID" value="AT2G20110.2"/>
    <property type="gene ID" value="AT2G20110"/>
</dbReference>
<dbReference type="KEGG" id="ath:AT2G20110"/>
<dbReference type="Araport" id="AT2G20110"/>
<dbReference type="TAIR" id="AT2G20110"/>
<dbReference type="eggNOG" id="KOG1171">
    <property type="taxonomic scope" value="Eukaryota"/>
</dbReference>
<dbReference type="InParanoid" id="Q9SL70"/>
<dbReference type="PhylomeDB" id="Q9SL70"/>
<dbReference type="PRO" id="PR:Q9SL70"/>
<dbReference type="Proteomes" id="UP000006548">
    <property type="component" value="Chromosome 2"/>
</dbReference>
<dbReference type="ExpressionAtlas" id="Q9SL70">
    <property type="expression patterns" value="baseline and differential"/>
</dbReference>
<dbReference type="GO" id="GO:0005634">
    <property type="term" value="C:nucleus"/>
    <property type="evidence" value="ECO:0007669"/>
    <property type="project" value="UniProtKB-SubCell"/>
</dbReference>
<dbReference type="GO" id="GO:0003700">
    <property type="term" value="F:DNA-binding transcription factor activity"/>
    <property type="evidence" value="ECO:0000250"/>
    <property type="project" value="TAIR"/>
</dbReference>
<dbReference type="GO" id="GO:0046872">
    <property type="term" value="F:metal ion binding"/>
    <property type="evidence" value="ECO:0007669"/>
    <property type="project" value="UniProtKB-KW"/>
</dbReference>
<dbReference type="InterPro" id="IPR005172">
    <property type="entry name" value="CRC"/>
</dbReference>
<dbReference type="InterPro" id="IPR028307">
    <property type="entry name" value="Lin-54_fam"/>
</dbReference>
<dbReference type="InterPro" id="IPR033467">
    <property type="entry name" value="Tesmin/TSO1-like_CXC"/>
</dbReference>
<dbReference type="PANTHER" id="PTHR12446:SF34">
    <property type="entry name" value="PROTEIN LIN-54 HOMOLOG"/>
    <property type="match status" value="1"/>
</dbReference>
<dbReference type="PANTHER" id="PTHR12446">
    <property type="entry name" value="TESMIN/TSO1-RELATED"/>
    <property type="match status" value="1"/>
</dbReference>
<dbReference type="Pfam" id="PF03638">
    <property type="entry name" value="TCR"/>
    <property type="match status" value="2"/>
</dbReference>
<dbReference type="SMART" id="SM01114">
    <property type="entry name" value="CXC"/>
    <property type="match status" value="2"/>
</dbReference>
<dbReference type="PROSITE" id="PS51634">
    <property type="entry name" value="CRC"/>
    <property type="match status" value="1"/>
</dbReference>
<accession>Q9SL70</accession>
<accession>F4IUE5</accession>
<accession>Q8GUZ0</accession>
<accession>Q8GUZ1</accession>
<accession>Q8GUZ2</accession>
<keyword id="KW-0025">Alternative splicing</keyword>
<keyword id="KW-0217">Developmental protein</keyword>
<keyword id="KW-0479">Metal-binding</keyword>
<keyword id="KW-0539">Nucleus</keyword>
<keyword id="KW-1185">Reference proteome</keyword>
<keyword id="KW-0862">Zinc</keyword>
<protein>
    <recommendedName>
        <fullName>Protein tesmin/TSO1-like CXC 6</fullName>
        <shortName>AtTCX6</shortName>
    </recommendedName>
</protein>
<comment type="function">
    <text evidence="1">Plays a role in development of both male and female reproductive tissues.</text>
</comment>
<comment type="interaction">
    <interactant intactId="EBI-1238421">
        <id>Q9SL70</id>
    </interactant>
    <interactant intactId="EBI-4466572">
        <id>Q9LM76</id>
        <label>PUB44</label>
    </interactant>
    <organismsDiffer>false</organismsDiffer>
    <experiments>3</experiments>
</comment>
<comment type="subcellular location">
    <subcellularLocation>
        <location evidence="6">Nucleus</location>
    </subcellularLocation>
</comment>
<comment type="alternative products">
    <event type="alternative splicing"/>
    <isoform>
        <id>Q9SL70-1</id>
        <name>1</name>
        <sequence type="displayed"/>
    </isoform>
    <isoform>
        <id>Q9SL70-2</id>
        <name>2</name>
        <sequence type="described" ref="VSP_044004"/>
    </isoform>
    <isoform>
        <id>Q9SL70-3</id>
        <name>3</name>
        <sequence type="described" ref="VSP_044003"/>
    </isoform>
</comment>
<comment type="tissue specificity">
    <text evidence="4">Ubiquitous but expressed mostly in flowers.</text>
</comment>
<comment type="domain">
    <text>The cysteine-rich domain CRC binds zinc in vitro.</text>
</comment>
<comment type="miscellaneous">
    <molecule>Isoform 2</molecule>
    <text evidence="6">May be due to a competing acceptor splice site.</text>
</comment>
<comment type="miscellaneous">
    <molecule>Isoform 3</molecule>
    <text evidence="6">May be due to a competing donor splice site.</text>
</comment>
<comment type="similarity">
    <text evidence="6">Belongs to the lin-54 family.</text>
</comment>
<name>TCX6_ARATH</name>
<sequence length="571" mass="61313">MGEGEEGDKFPPKTDEVTQESMKSARQLDFTGGSSDVEHSHSNQASSMAAASIPSPIVTVTRPIITSQAPPTVATPIPPPPQSQGIILHVPIRHPRPESPNSMPRPAGETRDGTPQKKKQCNCKHSRCLKLYCECFASGTYCDGCNCVNCFNNVENEPARRQAVESTLERNPNAFRPKIAASPHGGRDNREEVGDVVMLARHNKGCHCKKSGCLKKYCECFQANILCSENCKCLDCKNFEGSEVRQSLFHGEHSHNLAYLQHANAAITGAIGSSGFASAPPPKRRKGQEIFFNQGTKDSSTHRLGQANNGRTTSSQTGSRAGGNASLGPSKVVYKSLLANIIKPMDVKALCSVLVAVAGEAAKTLTEKRLANQKETSVASSVQDQGHVNNKAEKSGLEDSNADGSKGRSLSPETLALMCDERDTMLMVAASPNCSVEPTSQLPNGQDQVYAEQEKVVLTKFRDCLNRIISCGEVKESNCSMSRMDLDTPVQTTVRIDPVVQQAPVANGVSQTAKQPSQLNTTTPNTSSQTANGVSQTAKQPSQLTTTTTTPNTSSQTHLHKTPALSEKKDL</sequence>
<evidence type="ECO:0000250" key="1"/>
<evidence type="ECO:0000255" key="2">
    <source>
        <dbReference type="PROSITE-ProRule" id="PRU00971"/>
    </source>
</evidence>
<evidence type="ECO:0000256" key="3">
    <source>
        <dbReference type="SAM" id="MobiDB-lite"/>
    </source>
</evidence>
<evidence type="ECO:0000269" key="4">
    <source>
    </source>
</evidence>
<evidence type="ECO:0000303" key="5">
    <source>
    </source>
</evidence>
<evidence type="ECO:0000305" key="6"/>
<gene>
    <name type="primary">TCX6</name>
    <name type="ordered locus">At2g20110</name>
    <name type="ORF">T2G17.9</name>
</gene>
<reference key="1">
    <citation type="journal article" date="1999" name="Nature">
        <title>Sequence and analysis of chromosome 2 of the plant Arabidopsis thaliana.</title>
        <authorList>
            <person name="Lin X."/>
            <person name="Kaul S."/>
            <person name="Rounsley S.D."/>
            <person name="Shea T.P."/>
            <person name="Benito M.-I."/>
            <person name="Town C.D."/>
            <person name="Fujii C.Y."/>
            <person name="Mason T.M."/>
            <person name="Bowman C.L."/>
            <person name="Barnstead M.E."/>
            <person name="Feldblyum T.V."/>
            <person name="Buell C.R."/>
            <person name="Ketchum K.A."/>
            <person name="Lee J.J."/>
            <person name="Ronning C.M."/>
            <person name="Koo H.L."/>
            <person name="Moffat K.S."/>
            <person name="Cronin L.A."/>
            <person name="Shen M."/>
            <person name="Pai G."/>
            <person name="Van Aken S."/>
            <person name="Umayam L."/>
            <person name="Tallon L.J."/>
            <person name="Gill J.E."/>
            <person name="Adams M.D."/>
            <person name="Carrera A.J."/>
            <person name="Creasy T.H."/>
            <person name="Goodman H.M."/>
            <person name="Somerville C.R."/>
            <person name="Copenhaver G.P."/>
            <person name="Preuss D."/>
            <person name="Nierman W.C."/>
            <person name="White O."/>
            <person name="Eisen J.A."/>
            <person name="Salzberg S.L."/>
            <person name="Fraser C.M."/>
            <person name="Venter J.C."/>
        </authorList>
    </citation>
    <scope>NUCLEOTIDE SEQUENCE [LARGE SCALE GENOMIC DNA]</scope>
    <source>
        <strain>cv. Columbia</strain>
    </source>
</reference>
<reference key="2">
    <citation type="journal article" date="2017" name="Plant J.">
        <title>Araport11: a complete reannotation of the Arabidopsis thaliana reference genome.</title>
        <authorList>
            <person name="Cheng C.Y."/>
            <person name="Krishnakumar V."/>
            <person name="Chan A.P."/>
            <person name="Thibaud-Nissen F."/>
            <person name="Schobel S."/>
            <person name="Town C.D."/>
        </authorList>
    </citation>
    <scope>GENOME REANNOTATION</scope>
    <source>
        <strain>cv. Columbia</strain>
    </source>
</reference>
<reference key="3">
    <citation type="submission" date="2009-03" db="EMBL/GenBank/DDBJ databases">
        <title>ORF cloning and analysis of Arabidopsis transcription factor genes.</title>
        <authorList>
            <person name="Fujita M."/>
            <person name="Mizukado S."/>
            <person name="Seki M."/>
            <person name="Shinozaki K."/>
            <person name="Mitsuda N."/>
            <person name="Takiguchi Y."/>
            <person name="Takagi M."/>
        </authorList>
    </citation>
    <scope>NUCLEOTIDE SEQUENCE [LARGE SCALE MRNA] (ISOFORM 1)</scope>
</reference>
<reference key="4">
    <citation type="journal article" date="2002" name="Plant Physiol.">
        <title>Cloning and sequencing of cDNAs for hypothetical genes from chromosome 2 of Arabidopsis.</title>
        <authorList>
            <person name="Xiao Y.-L."/>
            <person name="Malik M."/>
            <person name="Whitelaw C.A."/>
            <person name="Town C.D."/>
        </authorList>
    </citation>
    <scope>NUCLEOTIDE SEQUENCE [LARGE SCALE MRNA] OF 36-571 (ISOFORMS 1; 2 AND 3)</scope>
    <source>
        <strain>cv. Columbia</strain>
    </source>
</reference>
<reference key="5">
    <citation type="journal article" date="2007" name="J. Exp. Bot.">
        <title>The conserved cysteine-rich domain of a tesmin/TSO1-like protein binds zinc in vitro and TSO1 is required for both male and female fertility in Arabidopsis thaliana.</title>
        <authorList>
            <person name="Andersen S.U."/>
            <person name="Algreen-Petersen R.G."/>
            <person name="Hoedl M."/>
            <person name="Jurkiewicz A."/>
            <person name="Cvitanich C."/>
            <person name="Braunschweig U."/>
            <person name="Schauser L."/>
            <person name="Oh S.A."/>
            <person name="Twell D."/>
            <person name="Jensen E.O."/>
        </authorList>
    </citation>
    <scope>GENE FAMILY</scope>
    <scope>NOMENCLATURE</scope>
    <scope>ZINC-BINDING</scope>
    <scope>TISSUE SPECIFICITY</scope>
</reference>
<feature type="chain" id="PRO_0000418171" description="Protein tesmin/TSO1-like CXC 6">
    <location>
        <begin position="1"/>
        <end position="571"/>
    </location>
</feature>
<feature type="domain" description="CRC" evidence="2">
    <location>
        <begin position="117"/>
        <end position="241"/>
    </location>
</feature>
<feature type="region of interest" description="Disordered" evidence="3">
    <location>
        <begin position="1"/>
        <end position="52"/>
    </location>
</feature>
<feature type="region of interest" description="Disordered" evidence="3">
    <location>
        <begin position="92"/>
        <end position="119"/>
    </location>
</feature>
<feature type="region of interest" description="Disordered" evidence="3">
    <location>
        <begin position="293"/>
        <end position="325"/>
    </location>
</feature>
<feature type="region of interest" description="Disordered" evidence="3">
    <location>
        <begin position="370"/>
        <end position="411"/>
    </location>
</feature>
<feature type="region of interest" description="Disordered" evidence="3">
    <location>
        <begin position="507"/>
        <end position="571"/>
    </location>
</feature>
<feature type="compositionally biased region" description="Basic and acidic residues" evidence="3">
    <location>
        <begin position="7"/>
        <end position="16"/>
    </location>
</feature>
<feature type="compositionally biased region" description="Polar residues" evidence="3">
    <location>
        <begin position="293"/>
        <end position="319"/>
    </location>
</feature>
<feature type="compositionally biased region" description="Polar residues" evidence="3">
    <location>
        <begin position="373"/>
        <end position="388"/>
    </location>
</feature>
<feature type="compositionally biased region" description="Polar residues" evidence="3">
    <location>
        <begin position="508"/>
        <end position="539"/>
    </location>
</feature>
<feature type="compositionally biased region" description="Low complexity" evidence="3">
    <location>
        <begin position="540"/>
        <end position="557"/>
    </location>
</feature>
<feature type="splice variant" id="VSP_044003" description="In isoform 3." evidence="5">
    <location>
        <begin position="331"/>
        <end position="334"/>
    </location>
</feature>
<feature type="splice variant" id="VSP_044004" description="In isoform 2." evidence="5">
    <original>K</original>
    <variation>KVFCLFVA</variation>
    <location>
        <position position="475"/>
    </location>
</feature>
<feature type="sequence conflict" description="In Ref. 4; AAN85197/AAN85198/AAN85199." evidence="6" ref="4">
    <original>N</original>
    <variation>T</variation>
    <location>
        <position position="520"/>
    </location>
</feature>
<organism>
    <name type="scientific">Arabidopsis thaliana</name>
    <name type="common">Mouse-ear cress</name>
    <dbReference type="NCBI Taxonomy" id="3702"/>
    <lineage>
        <taxon>Eukaryota</taxon>
        <taxon>Viridiplantae</taxon>
        <taxon>Streptophyta</taxon>
        <taxon>Embryophyta</taxon>
        <taxon>Tracheophyta</taxon>
        <taxon>Spermatophyta</taxon>
        <taxon>Magnoliopsida</taxon>
        <taxon>eudicotyledons</taxon>
        <taxon>Gunneridae</taxon>
        <taxon>Pentapetalae</taxon>
        <taxon>rosids</taxon>
        <taxon>malvids</taxon>
        <taxon>Brassicales</taxon>
        <taxon>Brassicaceae</taxon>
        <taxon>Camelineae</taxon>
        <taxon>Arabidopsis</taxon>
    </lineage>
</organism>
<proteinExistence type="evidence at protein level"/>